<accession>P71021</accession>
<accession>O08052</accession>
<accession>Q796I7</accession>
<reference key="1">
    <citation type="journal article" date="1997" name="J. Bacteriol.">
        <title>The divIVA minicell locus of Bacillus subtilis.</title>
        <authorList>
            <person name="Cha J.-H."/>
            <person name="Stewart G.C."/>
        </authorList>
    </citation>
    <scope>NUCLEOTIDE SEQUENCE [GENOMIC DNA]</scope>
    <scope>FUNCTION</scope>
    <scope>MUTAGENESIS OF ALA-78 AND 157-ASP--GLU-164</scope>
    <scope>DISRUPTION PHENOTYPE</scope>
    <source>
        <strain>168</strain>
    </source>
</reference>
<reference key="2">
    <citation type="journal article" date="1997" name="Mol. Microbiol.">
        <title>The Bacillus subtilis DivIVA protein targets to the division septum and controls the site specificity of cell division.</title>
        <authorList>
            <person name="Edwards D.H."/>
            <person name="Errington J."/>
        </authorList>
    </citation>
    <scope>NUCLEOTIDE SEQUENCE [GENOMIC DNA]</scope>
    <scope>FUNCTION</scope>
    <scope>SUBCELLULAR LOCATION</scope>
    <scope>INDUCTION</scope>
    <scope>DISRUPTION PHENOTYPE</scope>
    <source>
        <strain>168</strain>
    </source>
</reference>
<reference key="3">
    <citation type="journal article" date="1997" name="Nature">
        <title>The complete genome sequence of the Gram-positive bacterium Bacillus subtilis.</title>
        <authorList>
            <person name="Kunst F."/>
            <person name="Ogasawara N."/>
            <person name="Moszer I."/>
            <person name="Albertini A.M."/>
            <person name="Alloni G."/>
            <person name="Azevedo V."/>
            <person name="Bertero M.G."/>
            <person name="Bessieres P."/>
            <person name="Bolotin A."/>
            <person name="Borchert S."/>
            <person name="Borriss R."/>
            <person name="Boursier L."/>
            <person name="Brans A."/>
            <person name="Braun M."/>
            <person name="Brignell S.C."/>
            <person name="Bron S."/>
            <person name="Brouillet S."/>
            <person name="Bruschi C.V."/>
            <person name="Caldwell B."/>
            <person name="Capuano V."/>
            <person name="Carter N.M."/>
            <person name="Choi S.-K."/>
            <person name="Codani J.-J."/>
            <person name="Connerton I.F."/>
            <person name="Cummings N.J."/>
            <person name="Daniel R.A."/>
            <person name="Denizot F."/>
            <person name="Devine K.M."/>
            <person name="Duesterhoeft A."/>
            <person name="Ehrlich S.D."/>
            <person name="Emmerson P.T."/>
            <person name="Entian K.-D."/>
            <person name="Errington J."/>
            <person name="Fabret C."/>
            <person name="Ferrari E."/>
            <person name="Foulger D."/>
            <person name="Fritz C."/>
            <person name="Fujita M."/>
            <person name="Fujita Y."/>
            <person name="Fuma S."/>
            <person name="Galizzi A."/>
            <person name="Galleron N."/>
            <person name="Ghim S.-Y."/>
            <person name="Glaser P."/>
            <person name="Goffeau A."/>
            <person name="Golightly E.J."/>
            <person name="Grandi G."/>
            <person name="Guiseppi G."/>
            <person name="Guy B.J."/>
            <person name="Haga K."/>
            <person name="Haiech J."/>
            <person name="Harwood C.R."/>
            <person name="Henaut A."/>
            <person name="Hilbert H."/>
            <person name="Holsappel S."/>
            <person name="Hosono S."/>
            <person name="Hullo M.-F."/>
            <person name="Itaya M."/>
            <person name="Jones L.-M."/>
            <person name="Joris B."/>
            <person name="Karamata D."/>
            <person name="Kasahara Y."/>
            <person name="Klaerr-Blanchard M."/>
            <person name="Klein C."/>
            <person name="Kobayashi Y."/>
            <person name="Koetter P."/>
            <person name="Koningstein G."/>
            <person name="Krogh S."/>
            <person name="Kumano M."/>
            <person name="Kurita K."/>
            <person name="Lapidus A."/>
            <person name="Lardinois S."/>
            <person name="Lauber J."/>
            <person name="Lazarevic V."/>
            <person name="Lee S.-M."/>
            <person name="Levine A."/>
            <person name="Liu H."/>
            <person name="Masuda S."/>
            <person name="Mauel C."/>
            <person name="Medigue C."/>
            <person name="Medina N."/>
            <person name="Mellado R.P."/>
            <person name="Mizuno M."/>
            <person name="Moestl D."/>
            <person name="Nakai S."/>
            <person name="Noback M."/>
            <person name="Noone D."/>
            <person name="O'Reilly M."/>
            <person name="Ogawa K."/>
            <person name="Ogiwara A."/>
            <person name="Oudega B."/>
            <person name="Park S.-H."/>
            <person name="Parro V."/>
            <person name="Pohl T.M."/>
            <person name="Portetelle D."/>
            <person name="Porwollik S."/>
            <person name="Prescott A.M."/>
            <person name="Presecan E."/>
            <person name="Pujic P."/>
            <person name="Purnelle B."/>
            <person name="Rapoport G."/>
            <person name="Rey M."/>
            <person name="Reynolds S."/>
            <person name="Rieger M."/>
            <person name="Rivolta C."/>
            <person name="Rocha E."/>
            <person name="Roche B."/>
            <person name="Rose M."/>
            <person name="Sadaie Y."/>
            <person name="Sato T."/>
            <person name="Scanlan E."/>
            <person name="Schleich S."/>
            <person name="Schroeter R."/>
            <person name="Scoffone F."/>
            <person name="Sekiguchi J."/>
            <person name="Sekowska A."/>
            <person name="Seror S.J."/>
            <person name="Serror P."/>
            <person name="Shin B.-S."/>
            <person name="Soldo B."/>
            <person name="Sorokin A."/>
            <person name="Tacconi E."/>
            <person name="Takagi T."/>
            <person name="Takahashi H."/>
            <person name="Takemaru K."/>
            <person name="Takeuchi M."/>
            <person name="Tamakoshi A."/>
            <person name="Tanaka T."/>
            <person name="Terpstra P."/>
            <person name="Tognoni A."/>
            <person name="Tosato V."/>
            <person name="Uchiyama S."/>
            <person name="Vandenbol M."/>
            <person name="Vannier F."/>
            <person name="Vassarotti A."/>
            <person name="Viari A."/>
            <person name="Wambutt R."/>
            <person name="Wedler E."/>
            <person name="Wedler H."/>
            <person name="Weitzenegger T."/>
            <person name="Winters P."/>
            <person name="Wipat A."/>
            <person name="Yamamoto H."/>
            <person name="Yamane K."/>
            <person name="Yasumoto K."/>
            <person name="Yata K."/>
            <person name="Yoshida K."/>
            <person name="Yoshikawa H.-F."/>
            <person name="Zumstein E."/>
            <person name="Yoshikawa H."/>
            <person name="Danchin A."/>
        </authorList>
    </citation>
    <scope>NUCLEOTIDE SEQUENCE [LARGE SCALE GENOMIC DNA]</scope>
    <source>
        <strain>168</strain>
    </source>
</reference>
<reference key="4">
    <citation type="journal article" date="2004" name="Mol. Microbiol.">
        <title>Identification of a polar targeting determinant for Bacillus subtilis DivIVA.</title>
        <authorList>
            <person name="Perry S.E."/>
            <person name="Edwards D.H."/>
        </authorList>
    </citation>
    <scope>MUTAGENESIS OF PHE-17; ARG-18; GLY-19 AND TYR-20</scope>
</reference>
<reference key="5">
    <citation type="journal article" date="2002" name="Microbiology">
        <title>Oligomerization of the Bacillus subtilis division protein DivIVA.</title>
        <authorList>
            <person name="Muchova K."/>
            <person name="Kutejova E."/>
            <person name="Scott D.J."/>
            <person name="Brannigan J.A."/>
            <person name="Lewis R.J."/>
            <person name="Wilkinson A.J."/>
            <person name="Barak I."/>
        </authorList>
    </citation>
    <scope>SUBUNIT</scope>
    <scope>MUTAGENESIS OF LEU-121 AND GLU-162</scope>
</reference>
<reference key="6">
    <citation type="journal article" date="2004" name="Mol. Microbiol.">
        <title>Oligomeric structure of the Bacillus subtilis cell division protein DivIVA determined by transmission electron microscopy.</title>
        <authorList>
            <person name="Stahlberg H."/>
            <person name="Kutejova E."/>
            <person name="Muchova K."/>
            <person name="Gregorini M."/>
            <person name="Lustig A."/>
            <person name="Mueller S.A."/>
            <person name="Olivieri V."/>
            <person name="Engel A."/>
            <person name="Wilkinson A.J."/>
            <person name="Barak I."/>
        </authorList>
    </citation>
    <scope>SUBUNIT</scope>
</reference>
<reference key="7">
    <citation type="journal article" date="2006" name="J. Bacteriol.">
        <title>The Bacillus subtilis DivIVA protein has a sporulation-specific proximity to Spo0J.</title>
        <authorList>
            <person name="Perry S.E."/>
            <person name="Edwards D.H."/>
        </authorList>
    </citation>
    <scope>SUBCELLULAR LOCATION</scope>
    <scope>INTERACTION WITH FTSZ; MIND AND SPO0J</scope>
</reference>
<reference key="8">
    <citation type="journal article" date="2008" name="Mol. Microbiol.">
        <title>MinJ (YvjD) is a topological determinant of cell division in Bacillus subtilis.</title>
        <authorList>
            <person name="Patrick J.E."/>
            <person name="Kearns D.B."/>
        </authorList>
    </citation>
    <scope>INTERACTION WITH MINJ</scope>
    <source>
        <strain>3610</strain>
    </source>
</reference>
<reference key="9">
    <citation type="journal article" date="2008" name="Mol. Microbiol.">
        <title>A novel component of the division-site selection system of Bacillus subtilis and a new mode of action for the division inhibitor MinCD.</title>
        <authorList>
            <person name="Bramkamp M."/>
            <person name="Emmins R."/>
            <person name="Weston L."/>
            <person name="Donovan C."/>
            <person name="Daniel R.A."/>
            <person name="Errington J."/>
        </authorList>
    </citation>
    <scope>INTERACTION WITH MINJ</scope>
    <source>
        <strain>168</strain>
    </source>
</reference>
<feature type="chain" id="PRO_0000360608" description="Septum site-determining protein DivIVA">
    <location>
        <begin position="1"/>
        <end position="164"/>
    </location>
</feature>
<feature type="coiled-coil region" evidence="1">
    <location>
        <begin position="29"/>
        <end position="107"/>
    </location>
</feature>
<feature type="mutagenesis site" description="Diffuse localization." evidence="4">
    <original>F</original>
    <variation>L</variation>
    <location>
        <position position="17"/>
    </location>
</feature>
<feature type="mutagenesis site" description="Localization at cytoplasmic foci instead of the cell pole. Stable interaction with Spo0J and association with the chromosome." evidence="4">
    <original>R</original>
    <variation>A</variation>
    <variation>C</variation>
    <location>
        <position position="18"/>
    </location>
</feature>
<feature type="mutagenesis site" description="Localized at cytoplasmic foci." evidence="4">
    <original>G</original>
    <variation>A</variation>
    <location>
        <position position="19"/>
    </location>
</feature>
<feature type="mutagenesis site" description="No effect on localization." evidence="4">
    <original>Y</original>
    <variation>C</variation>
    <location>
        <position position="20"/>
    </location>
</feature>
<feature type="mutagenesis site" description="In divIVA1; loss of function resulting in sporulation defect and in the formation of minicells." evidence="8">
    <original>A</original>
    <variation>T</variation>
    <location>
        <position position="78"/>
    </location>
</feature>
<feature type="mutagenesis site" description="In divIVA2; loss of function." evidence="2">
    <original>L</original>
    <variation>P</variation>
    <location>
        <position position="121"/>
    </location>
</feature>
<feature type="mutagenesis site" description="No effect." evidence="8">
    <original>DAVFEEKE</original>
    <variation>LQVSGVVI</variation>
    <location>
        <begin position="157"/>
        <end position="164"/>
    </location>
</feature>
<feature type="mutagenesis site" description="No effect." evidence="2">
    <original>E</original>
    <variation>K</variation>
    <location>
        <position position="162"/>
    </location>
</feature>
<feature type="helix" evidence="11">
    <location>
        <begin position="5"/>
        <end position="8"/>
    </location>
</feature>
<feature type="strand" evidence="11">
    <location>
        <begin position="19"/>
        <end position="21"/>
    </location>
</feature>
<feature type="helix" evidence="11">
    <location>
        <begin position="22"/>
        <end position="51"/>
    </location>
</feature>
<sequence length="164" mass="19341">MPLTPNDIHNKTFTKSFRGYDEDEVNEFLAQVRKDYEIVLRKKTELEAKVNELDERIGHFANIEETLNKSILVAQEAAEDVKRNSQKEAKLIVREAEKNADRIINESLSKSRKIAMEIEELKKQSKVFRTRFQMLIEAQLDLLKNDDWDHLLEYEVDAVFEEKE</sequence>
<dbReference type="EMBL" id="U60901">
    <property type="protein sequence ID" value="AAB49279.1"/>
    <property type="molecule type" value="Genomic_DNA"/>
</dbReference>
<dbReference type="EMBL" id="Z86114">
    <property type="protein sequence ID" value="CAB06818.1"/>
    <property type="molecule type" value="Genomic_DNA"/>
</dbReference>
<dbReference type="EMBL" id="AL009126">
    <property type="protein sequence ID" value="CAB13416.1"/>
    <property type="molecule type" value="Genomic_DNA"/>
</dbReference>
<dbReference type="PIR" id="B69616">
    <property type="entry name" value="B69616"/>
</dbReference>
<dbReference type="RefSeq" id="NP_389425.1">
    <property type="nucleotide sequence ID" value="NC_000964.3"/>
</dbReference>
<dbReference type="RefSeq" id="WP_003221468.1">
    <property type="nucleotide sequence ID" value="NZ_OZ025638.1"/>
</dbReference>
<dbReference type="PDB" id="2WUJ">
    <property type="method" value="X-ray"/>
    <property type="resolution" value="1.40 A"/>
    <property type="chains" value="A/B=1-57"/>
</dbReference>
<dbReference type="PDB" id="2WUK">
    <property type="method" value="X-ray"/>
    <property type="resolution" value="1.90 A"/>
    <property type="chains" value="A/B/C/D=1-57"/>
</dbReference>
<dbReference type="PDBsum" id="2WUJ"/>
<dbReference type="PDBsum" id="2WUK"/>
<dbReference type="SMR" id="P71021"/>
<dbReference type="FunCoup" id="P71021">
    <property type="interactions" value="23"/>
</dbReference>
<dbReference type="IntAct" id="P71021">
    <property type="interactions" value="11"/>
</dbReference>
<dbReference type="MINT" id="P71021"/>
<dbReference type="STRING" id="224308.BSU15420"/>
<dbReference type="jPOST" id="P71021"/>
<dbReference type="PaxDb" id="224308-BSU15420"/>
<dbReference type="EnsemblBacteria" id="CAB13416">
    <property type="protein sequence ID" value="CAB13416"/>
    <property type="gene ID" value="BSU_15420"/>
</dbReference>
<dbReference type="GeneID" id="86873949"/>
<dbReference type="GeneID" id="939972"/>
<dbReference type="KEGG" id="bsu:BSU15420"/>
<dbReference type="PATRIC" id="fig|224308.179.peg.1680"/>
<dbReference type="eggNOG" id="COG3599">
    <property type="taxonomic scope" value="Bacteria"/>
</dbReference>
<dbReference type="InParanoid" id="P71021"/>
<dbReference type="OrthoDB" id="9815492at2"/>
<dbReference type="PhylomeDB" id="P71021"/>
<dbReference type="BioCyc" id="BSUB:BSU15420-MONOMER"/>
<dbReference type="EvolutionaryTrace" id="P71021"/>
<dbReference type="PRO" id="PR:P71021"/>
<dbReference type="Proteomes" id="UP000001570">
    <property type="component" value="Chromosome"/>
</dbReference>
<dbReference type="GO" id="GO:0005737">
    <property type="term" value="C:cytoplasm"/>
    <property type="evidence" value="ECO:0007669"/>
    <property type="project" value="UniProtKB-SubCell"/>
</dbReference>
<dbReference type="GO" id="GO:0042802">
    <property type="term" value="F:identical protein binding"/>
    <property type="evidence" value="ECO:0000353"/>
    <property type="project" value="IntAct"/>
</dbReference>
<dbReference type="GO" id="GO:0000917">
    <property type="term" value="P:division septum assembly"/>
    <property type="evidence" value="ECO:0007669"/>
    <property type="project" value="UniProtKB-KW"/>
</dbReference>
<dbReference type="GO" id="GO:0009273">
    <property type="term" value="P:peptidoglycan-based cell wall biogenesis"/>
    <property type="evidence" value="ECO:0000318"/>
    <property type="project" value="GO_Central"/>
</dbReference>
<dbReference type="GO" id="GO:0030435">
    <property type="term" value="P:sporulation resulting in formation of a cellular spore"/>
    <property type="evidence" value="ECO:0007669"/>
    <property type="project" value="UniProtKB-KW"/>
</dbReference>
<dbReference type="Gene3D" id="6.10.250.660">
    <property type="match status" value="1"/>
</dbReference>
<dbReference type="InterPro" id="IPR019933">
    <property type="entry name" value="DivIVA_domain"/>
</dbReference>
<dbReference type="InterPro" id="IPR007793">
    <property type="entry name" value="DivIVA_fam"/>
</dbReference>
<dbReference type="NCBIfam" id="TIGR03544">
    <property type="entry name" value="DivI1A_domain"/>
    <property type="match status" value="1"/>
</dbReference>
<dbReference type="PANTHER" id="PTHR35794">
    <property type="entry name" value="CELL DIVISION PROTEIN DIVIVA"/>
    <property type="match status" value="1"/>
</dbReference>
<dbReference type="PANTHER" id="PTHR35794:SF2">
    <property type="entry name" value="CELL DIVISION PROTEIN DIVIVA"/>
    <property type="match status" value="1"/>
</dbReference>
<dbReference type="Pfam" id="PF05103">
    <property type="entry name" value="DivIVA"/>
    <property type="match status" value="1"/>
</dbReference>
<organism>
    <name type="scientific">Bacillus subtilis (strain 168)</name>
    <dbReference type="NCBI Taxonomy" id="224308"/>
    <lineage>
        <taxon>Bacteria</taxon>
        <taxon>Bacillati</taxon>
        <taxon>Bacillota</taxon>
        <taxon>Bacilli</taxon>
        <taxon>Bacillales</taxon>
        <taxon>Bacillaceae</taxon>
        <taxon>Bacillus</taxon>
    </lineage>
</organism>
<protein>
    <recommendedName>
        <fullName>Septum site-determining protein DivIVA</fullName>
    </recommendedName>
    <alternativeName>
        <fullName>Cell division initiation protein DivIVA</fullName>
    </alternativeName>
    <alternativeName>
        <fullName>Minicell-associated protein DivIVA</fullName>
    </alternativeName>
</protein>
<name>DIV4A_BACSU</name>
<keyword id="KW-0002">3D-structure</keyword>
<keyword id="KW-0131">Cell cycle</keyword>
<keyword id="KW-0132">Cell division</keyword>
<keyword id="KW-0175">Coiled coil</keyword>
<keyword id="KW-0963">Cytoplasm</keyword>
<keyword id="KW-1185">Reference proteome</keyword>
<keyword id="KW-0717">Septation</keyword>
<keyword id="KW-0749">Sporulation</keyword>
<gene>
    <name type="primary">divIVA</name>
    <name type="synonym">ylmJ</name>
    <name type="ordered locus">BSU15420</name>
</gene>
<proteinExistence type="evidence at protein level"/>
<evidence type="ECO:0000255" key="1"/>
<evidence type="ECO:0000269" key="2">
    <source>
    </source>
</evidence>
<evidence type="ECO:0000269" key="3">
    <source>
    </source>
</evidence>
<evidence type="ECO:0000269" key="4">
    <source>
    </source>
</evidence>
<evidence type="ECO:0000269" key="5">
    <source>
    </source>
</evidence>
<evidence type="ECO:0000269" key="6">
    <source>
    </source>
</evidence>
<evidence type="ECO:0000269" key="7">
    <source>
    </source>
</evidence>
<evidence type="ECO:0000269" key="8">
    <source>
    </source>
</evidence>
<evidence type="ECO:0000269" key="9">
    <source>
    </source>
</evidence>
<evidence type="ECO:0000305" key="10"/>
<evidence type="ECO:0007829" key="11">
    <source>
        <dbReference type="PDB" id="2WUJ"/>
    </source>
</evidence>
<comment type="function">
    <text evidence="8 9">May act as a pilot protein, directing MinCD to the polar septation sites or by inhibiting MinCD at the midcell site of division. Required for polar localization of the chromosome during sporulation.</text>
</comment>
<comment type="subunit">
    <text evidence="2 3 5 6 7">Oligomers. Interacts with FtsZ, MinD, MinJ and Spo0J. The association with Spo0J is transient and occurs at a specific point during development.</text>
</comment>
<comment type="interaction">
    <interactant intactId="EBI-5243654">
        <id>P71021</id>
    </interactant>
    <interactant intactId="EBI-6418652">
        <id>O32049</id>
        <label>comN</label>
    </interactant>
    <organismsDiffer>false</organismsDiffer>
    <experiments>4</experiments>
</comment>
<comment type="interaction">
    <interactant intactId="EBI-5243654">
        <id>P71021</id>
    </interactant>
    <interactant intactId="EBI-5243654">
        <id>P71021</id>
        <label>divIVA</label>
    </interactant>
    <organismsDiffer>false</organismsDiffer>
    <experiments>10</experiments>
</comment>
<comment type="subcellular location">
    <subcellularLocation>
        <location evidence="5 9">Cytoplasm</location>
    </subcellularLocation>
    <text>Localized at the cell division site and found exclusively at the cell pole during sporulation.</text>
</comment>
<comment type="induction">
    <text evidence="9">Constitutively expressed.</text>
</comment>
<comment type="disruption phenotype">
    <text evidence="8 9">Misplacement of the septum during cell division, resulting in the formation of small, circular, anucleate minicells.</text>
</comment>
<comment type="miscellaneous">
    <text>Overexpression of DivIVA is lethal.</text>
</comment>
<comment type="similarity">
    <text evidence="10">Belongs to the DivIVA family.</text>
</comment>